<feature type="chain" id="PRO_0000452444" description="Dynein axonemal intermediate chain 4">
    <location>
        <begin position="1"/>
        <end position="742"/>
    </location>
</feature>
<feature type="repeat" description="WD 1" evidence="2">
    <location>
        <begin position="462"/>
        <end position="502"/>
    </location>
</feature>
<feature type="repeat" description="WD 2" evidence="2">
    <location>
        <begin position="511"/>
        <end position="559"/>
    </location>
</feature>
<feature type="repeat" description="WD 3" evidence="2">
    <location>
        <begin position="631"/>
        <end position="671"/>
    </location>
</feature>
<feature type="repeat" description="WD 4" evidence="2">
    <location>
        <begin position="674"/>
        <end position="713"/>
    </location>
</feature>
<name>DNAI4_XENLA</name>
<comment type="function">
    <text evidence="1">Plays a critical role in the assembly of axonemal dynein complex, thereby playing a role in ciliary motility.</text>
</comment>
<comment type="subunit">
    <text evidence="1">Part of the multisubunit axonemal dynein complex formed at least of two heavy chains and a number of intermediate and light chains. Associated with axonemal dynein subunits such as, DNAH2, DNAI3, and DYNLT1.</text>
</comment>
<comment type="subcellular location">
    <subcellularLocation>
        <location evidence="1">Cytoplasm</location>
        <location evidence="1">Cytoskeleton</location>
        <location evidence="1">Flagellum axoneme</location>
    </subcellularLocation>
    <subcellularLocation>
        <location evidence="1">Cytoplasm</location>
        <location evidence="1">Cytoskeleton</location>
        <location evidence="1">Cilium axoneme</location>
    </subcellularLocation>
    <subcellularLocation>
        <location evidence="3">Dynein axonemal particle</location>
    </subcellularLocation>
</comment>
<protein>
    <recommendedName>
        <fullName evidence="5">Dynein axonemal intermediate chain 4</fullName>
    </recommendedName>
    <alternativeName>
        <fullName>WD repeat-containing protein 78</fullName>
    </alternativeName>
</protein>
<accession>Q6GPB9</accession>
<evidence type="ECO:0000250" key="1">
    <source>
        <dbReference type="UniProtKB" id="E9PYY5"/>
    </source>
</evidence>
<evidence type="ECO:0000255" key="2"/>
<evidence type="ECO:0000269" key="3">
    <source>
    </source>
</evidence>
<evidence type="ECO:0000303" key="4">
    <source>
    </source>
</evidence>
<evidence type="ECO:0000305" key="5"/>
<evidence type="ECO:0000312" key="6">
    <source>
        <dbReference type="EMBL" id="AAH73222.1"/>
    </source>
</evidence>
<evidence type="ECO:0000312" key="7">
    <source>
        <dbReference type="Xenbase" id="XB-GENE-5890885"/>
    </source>
</evidence>
<sequence length="742" mass="82648">MRSKLGTHFKKASVISGSVTQSKVNQSTFSRSIIGTSSRKSLNLHAESKMGERNLSMVSKQSIKIFDDDGKDVSPQPLFQAEPGTVPQKQNKLFTPPDASGIGASDIFSSISLQHTAFNASFVGPFTRSTFGASTVSRSSKETESMTEDIEETGFKREIASLSEIQGKQHEMQPTEEDLDKIINIFLTDTETLWLLDMPPALTATDSENADLVRVRNQAYEDLCKDKVGNDKYIERMMQTFSGAPKNKEVQCDRIILEDTGVMASVWDLYDSYLSPESLPMKEAVDRAIETKNISSSRLSESRGTQSMNSLGRGDSFSSSIADIERLALTRIPDEVEPDSEEILKSEKFLQDLFFMERVVVENTFQSRLAAYRQLPVIADPDEDEDKISAMPSNIVSPSLNRLWSFACDVTKGHNVSSMSWNKKNSDLLAVGYGQFGFAEQKGGMACCWSLKNIMWPERIFHCECGVTAVDFSAVHPNLLAVGMYNGTVAIYNVQNNEDFPVLDSSDNPNKHTSPVWQLKWIEHDRGNLGDDKGEILVSVCADGRITRWHIRKGLDCNDLMKLKRTGSGKSKKSSNEKERKGEAFISRQAPGMCFDFLPKDSNIYLAGTEEGHIHKCSCSYNEQFLDTYRGHKGPVYKIVWSPFCPDVFLSCSADWCIHLWQQDVLLPILTFSNTTNAVYDIMWSPSSALMFGAVSENRVEIWDLGVSIIDPVIVNEANPGVKLTSILFAKNTDCVLIGDSD</sequence>
<keyword id="KW-0966">Cell projection</keyword>
<keyword id="KW-0969">Cilium</keyword>
<keyword id="KW-0963">Cytoplasm</keyword>
<keyword id="KW-0206">Cytoskeleton</keyword>
<keyword id="KW-0282">Flagellum</keyword>
<keyword id="KW-1185">Reference proteome</keyword>
<keyword id="KW-0677">Repeat</keyword>
<keyword id="KW-0853">WD repeat</keyword>
<gene>
    <name evidence="7" type="primary">dnai4</name>
    <name evidence="4" type="synonym">wdr78</name>
</gene>
<reference evidence="6" key="1">
    <citation type="submission" date="2004-06" db="EMBL/GenBank/DDBJ databases">
        <authorList>
            <consortium name="NIH - Xenopus Gene Collection (XGC) project"/>
        </authorList>
    </citation>
    <scope>NUCLEOTIDE SEQUENCE [LARGE SCALE MRNA]</scope>
    <source>
        <tissue evidence="6">Embryo</tissue>
    </source>
</reference>
<reference key="2">
    <citation type="journal article" date="2020" name="Elife">
        <title>Functional partitioning of a liquid-like organelle during assembly of axonemal dyneins.</title>
        <authorList>
            <person name="Lee C."/>
            <person name="Cox R.M."/>
            <person name="Papoulas O."/>
            <person name="Horani A."/>
            <person name="Drew K."/>
            <person name="Devitt C.C."/>
            <person name="Brody S.L."/>
            <person name="Marcotte E.M."/>
            <person name="Wallingford J.B."/>
        </authorList>
    </citation>
    <scope>FUNCTION</scope>
    <scope>SUBCELLULAR LOCATION</scope>
</reference>
<dbReference type="EMBL" id="BC073222">
    <property type="protein sequence ID" value="AAH73222.1"/>
    <property type="molecule type" value="mRNA"/>
</dbReference>
<dbReference type="RefSeq" id="NP_001085700.1">
    <property type="nucleotide sequence ID" value="NM_001092231.1"/>
</dbReference>
<dbReference type="SMR" id="Q6GPB9"/>
<dbReference type="DNASU" id="444126"/>
<dbReference type="GeneID" id="444126"/>
<dbReference type="KEGG" id="xla:444126"/>
<dbReference type="AGR" id="Xenbase:XB-GENE-5890885"/>
<dbReference type="CTD" id="444126"/>
<dbReference type="Xenbase" id="XB-GENE-5890885">
    <property type="gene designation" value="dnai4.S"/>
</dbReference>
<dbReference type="OrthoDB" id="10259804at2759"/>
<dbReference type="Proteomes" id="UP000186698">
    <property type="component" value="Chromosome 4S"/>
</dbReference>
<dbReference type="Bgee" id="444126">
    <property type="expression patterns" value="Expressed in testis and 16 other cell types or tissues"/>
</dbReference>
<dbReference type="GO" id="GO:0005858">
    <property type="term" value="C:axonemal dynein complex"/>
    <property type="evidence" value="ECO:0000318"/>
    <property type="project" value="GO_Central"/>
</dbReference>
<dbReference type="GO" id="GO:0120293">
    <property type="term" value="C:dynein axonemal particle"/>
    <property type="evidence" value="ECO:0000314"/>
    <property type="project" value="UniProtKB"/>
</dbReference>
<dbReference type="GO" id="GO:0031514">
    <property type="term" value="C:motile cilium"/>
    <property type="evidence" value="ECO:0007669"/>
    <property type="project" value="UniProtKB-KW"/>
</dbReference>
<dbReference type="GO" id="GO:0045504">
    <property type="term" value="F:dynein heavy chain binding"/>
    <property type="evidence" value="ECO:0000318"/>
    <property type="project" value="GO_Central"/>
</dbReference>
<dbReference type="GO" id="GO:0045503">
    <property type="term" value="F:dynein light chain binding"/>
    <property type="evidence" value="ECO:0000318"/>
    <property type="project" value="GO_Central"/>
</dbReference>
<dbReference type="GO" id="GO:0003341">
    <property type="term" value="P:cilium movement"/>
    <property type="evidence" value="ECO:0000318"/>
    <property type="project" value="GO_Central"/>
</dbReference>
<dbReference type="FunFam" id="2.130.10.10:FF:000373">
    <property type="entry name" value="WD repeat domain 78"/>
    <property type="match status" value="1"/>
</dbReference>
<dbReference type="FunFam" id="2.130.10.10:FF:000379">
    <property type="entry name" value="WD repeat domain 78"/>
    <property type="match status" value="1"/>
</dbReference>
<dbReference type="Gene3D" id="2.130.10.10">
    <property type="entry name" value="YVTN repeat-like/Quinoprotein amine dehydrogenase"/>
    <property type="match status" value="1"/>
</dbReference>
<dbReference type="InterPro" id="IPR050687">
    <property type="entry name" value="Dynein_IC"/>
</dbReference>
<dbReference type="InterPro" id="IPR015943">
    <property type="entry name" value="WD40/YVTN_repeat-like_dom_sf"/>
</dbReference>
<dbReference type="InterPro" id="IPR036322">
    <property type="entry name" value="WD40_repeat_dom_sf"/>
</dbReference>
<dbReference type="InterPro" id="IPR001680">
    <property type="entry name" value="WD40_rpt"/>
</dbReference>
<dbReference type="PANTHER" id="PTHR12442:SF12">
    <property type="entry name" value="DYNEIN AXONEMAL INTERMEDIATE CHAIN 4"/>
    <property type="match status" value="1"/>
</dbReference>
<dbReference type="PANTHER" id="PTHR12442">
    <property type="entry name" value="DYNEIN INTERMEDIATE CHAIN"/>
    <property type="match status" value="1"/>
</dbReference>
<dbReference type="Pfam" id="PF00400">
    <property type="entry name" value="WD40"/>
    <property type="match status" value="1"/>
</dbReference>
<dbReference type="SMART" id="SM00320">
    <property type="entry name" value="WD40"/>
    <property type="match status" value="4"/>
</dbReference>
<dbReference type="SUPFAM" id="SSF50978">
    <property type="entry name" value="WD40 repeat-like"/>
    <property type="match status" value="1"/>
</dbReference>
<dbReference type="PROSITE" id="PS50082">
    <property type="entry name" value="WD_REPEATS_2"/>
    <property type="match status" value="2"/>
</dbReference>
<dbReference type="PROSITE" id="PS50294">
    <property type="entry name" value="WD_REPEATS_REGION"/>
    <property type="match status" value="1"/>
</dbReference>
<organism evidence="6">
    <name type="scientific">Xenopus laevis</name>
    <name type="common">African clawed frog</name>
    <dbReference type="NCBI Taxonomy" id="8355"/>
    <lineage>
        <taxon>Eukaryota</taxon>
        <taxon>Metazoa</taxon>
        <taxon>Chordata</taxon>
        <taxon>Craniata</taxon>
        <taxon>Vertebrata</taxon>
        <taxon>Euteleostomi</taxon>
        <taxon>Amphibia</taxon>
        <taxon>Batrachia</taxon>
        <taxon>Anura</taxon>
        <taxon>Pipoidea</taxon>
        <taxon>Pipidae</taxon>
        <taxon>Xenopodinae</taxon>
        <taxon>Xenopus</taxon>
        <taxon>Xenopus</taxon>
    </lineage>
</organism>
<proteinExistence type="evidence at transcript level"/>